<organism>
    <name type="scientific">Salmonella choleraesuis (strain SC-B67)</name>
    <dbReference type="NCBI Taxonomy" id="321314"/>
    <lineage>
        <taxon>Bacteria</taxon>
        <taxon>Pseudomonadati</taxon>
        <taxon>Pseudomonadota</taxon>
        <taxon>Gammaproteobacteria</taxon>
        <taxon>Enterobacterales</taxon>
        <taxon>Enterobacteriaceae</taxon>
        <taxon>Salmonella</taxon>
    </lineage>
</organism>
<feature type="chain" id="PRO_0000210871" description="tRNA 2-selenouridine synthase">
    <location>
        <begin position="1"/>
        <end position="364"/>
    </location>
</feature>
<feature type="domain" description="Rhodanese" evidence="1">
    <location>
        <begin position="14"/>
        <end position="137"/>
    </location>
</feature>
<feature type="active site" description="S-selanylcysteine intermediate" evidence="1">
    <location>
        <position position="97"/>
    </location>
</feature>
<accession>Q57S51</accession>
<comment type="function">
    <text evidence="1">Involved in the post-transcriptional modification of the uridine at the wobble position (U34) of tRNA(Lys), tRNA(Glu) and tRNA(Gln). Catalyzes the conversion of 2-thiouridine (S2U-RNA) to 2-selenouridine (Se2U-RNA). Acts in a two-step process involving geranylation of 2-thiouridine (S2U) to S-geranyl-2-thiouridine (geS2U) and subsequent selenation of the latter derivative to 2-selenouridine (Se2U) in the tRNA chain.</text>
</comment>
<comment type="catalytic activity">
    <reaction evidence="1">
        <text>5-methylaminomethyl-2-thiouridine(34) in tRNA + selenophosphate + (2E)-geranyl diphosphate + H2O + H(+) = 5-methylaminomethyl-2-selenouridine(34) in tRNA + (2E)-thiogeraniol + phosphate + diphosphate</text>
        <dbReference type="Rhea" id="RHEA:42716"/>
        <dbReference type="Rhea" id="RHEA-COMP:10195"/>
        <dbReference type="Rhea" id="RHEA-COMP:10196"/>
        <dbReference type="ChEBI" id="CHEBI:15377"/>
        <dbReference type="ChEBI" id="CHEBI:15378"/>
        <dbReference type="ChEBI" id="CHEBI:16144"/>
        <dbReference type="ChEBI" id="CHEBI:33019"/>
        <dbReference type="ChEBI" id="CHEBI:43474"/>
        <dbReference type="ChEBI" id="CHEBI:58057"/>
        <dbReference type="ChEBI" id="CHEBI:74455"/>
        <dbReference type="ChEBI" id="CHEBI:82743"/>
        <dbReference type="ChEBI" id="CHEBI:143703"/>
        <dbReference type="EC" id="2.9.1.3"/>
    </reaction>
    <physiologicalReaction direction="left-to-right" evidence="1">
        <dbReference type="Rhea" id="RHEA:42717"/>
    </physiologicalReaction>
</comment>
<comment type="catalytic activity">
    <reaction evidence="1">
        <text>5-methylaminomethyl-2-thiouridine(34) in tRNA + (2E)-geranyl diphosphate = 5-methylaminomethyl-S-(2E)-geranyl-thiouridine(34) in tRNA + diphosphate</text>
        <dbReference type="Rhea" id="RHEA:14085"/>
        <dbReference type="Rhea" id="RHEA-COMP:10195"/>
        <dbReference type="Rhea" id="RHEA-COMP:14654"/>
        <dbReference type="ChEBI" id="CHEBI:33019"/>
        <dbReference type="ChEBI" id="CHEBI:58057"/>
        <dbReference type="ChEBI" id="CHEBI:74455"/>
        <dbReference type="ChEBI" id="CHEBI:140632"/>
    </reaction>
    <physiologicalReaction direction="left-to-right" evidence="1">
        <dbReference type="Rhea" id="RHEA:14086"/>
    </physiologicalReaction>
</comment>
<comment type="catalytic activity">
    <reaction evidence="1">
        <text>5-methylaminomethyl-S-(2E)-geranyl-thiouridine(34) in tRNA + selenophosphate + H(+) = 5-methylaminomethyl-2-(Se-phospho)selenouridine(34) in tRNA + (2E)-thiogeraniol</text>
        <dbReference type="Rhea" id="RHEA:60172"/>
        <dbReference type="Rhea" id="RHEA-COMP:14654"/>
        <dbReference type="Rhea" id="RHEA-COMP:15523"/>
        <dbReference type="ChEBI" id="CHEBI:15378"/>
        <dbReference type="ChEBI" id="CHEBI:16144"/>
        <dbReference type="ChEBI" id="CHEBI:140632"/>
        <dbReference type="ChEBI" id="CHEBI:143702"/>
        <dbReference type="ChEBI" id="CHEBI:143703"/>
    </reaction>
    <physiologicalReaction direction="left-to-right" evidence="1">
        <dbReference type="Rhea" id="RHEA:60173"/>
    </physiologicalReaction>
</comment>
<comment type="catalytic activity">
    <reaction evidence="1">
        <text>5-methylaminomethyl-2-(Se-phospho)selenouridine(34) in tRNA + H2O = 5-methylaminomethyl-2-selenouridine(34) in tRNA + phosphate</text>
        <dbReference type="Rhea" id="RHEA:60176"/>
        <dbReference type="Rhea" id="RHEA-COMP:10196"/>
        <dbReference type="Rhea" id="RHEA-COMP:15523"/>
        <dbReference type="ChEBI" id="CHEBI:15377"/>
        <dbReference type="ChEBI" id="CHEBI:43474"/>
        <dbReference type="ChEBI" id="CHEBI:82743"/>
        <dbReference type="ChEBI" id="CHEBI:143702"/>
    </reaction>
    <physiologicalReaction direction="left-to-right" evidence="1">
        <dbReference type="Rhea" id="RHEA:60177"/>
    </physiologicalReaction>
</comment>
<comment type="subunit">
    <text evidence="1">Monomer.</text>
</comment>
<comment type="similarity">
    <text evidence="1">Belongs to the SelU family.</text>
</comment>
<sequence>MQDRQKAQDYRALLLADTPLIDVRAPIEFEQGAMPGAINLPLMMDDERAAVGTCYKRQGADAALALGHRLVCGDIRQQRLEAWKAAYQRFPNGYLCCARGGQRSHIVQRWLQETGIDCPLIEGGYKALRQTAIQATWQLAQKPILLIGGCTGSGKTQLVRQQPNGVDLEGLARHRGSSFGRTLNPQLSQASFENKLAVELLKINARQTLKRWVLEDEGRTIGANHLPECLRERMAQAPIAVVEDPFALRLERLREEYFIRMHHDFTHAYGDEAGWQAYSEYLHHGLFAIRRRLGLQRFAELTDTLDRALAEQLSSGSTDGHMAWLVPLLNEYYDPMYRYQLEKKAANIVFRGPWQDVANWLKAQ</sequence>
<name>SELU_SALCH</name>
<evidence type="ECO:0000255" key="1">
    <source>
        <dbReference type="HAMAP-Rule" id="MF_01622"/>
    </source>
</evidence>
<keyword id="KW-0711">Selenium</keyword>
<keyword id="KW-0808">Transferase</keyword>
<proteinExistence type="inferred from homology"/>
<reference key="1">
    <citation type="journal article" date="2005" name="Nucleic Acids Res.">
        <title>The genome sequence of Salmonella enterica serovar Choleraesuis, a highly invasive and resistant zoonotic pathogen.</title>
        <authorList>
            <person name="Chiu C.-H."/>
            <person name="Tang P."/>
            <person name="Chu C."/>
            <person name="Hu S."/>
            <person name="Bao Q."/>
            <person name="Yu J."/>
            <person name="Chou Y.-Y."/>
            <person name="Wang H.-S."/>
            <person name="Lee Y.-S."/>
        </authorList>
    </citation>
    <scope>NUCLEOTIDE SEQUENCE [LARGE SCALE GENOMIC DNA]</scope>
    <source>
        <strain>SC-B67</strain>
    </source>
</reference>
<dbReference type="EC" id="2.9.1.3" evidence="1"/>
<dbReference type="EMBL" id="AE017220">
    <property type="protein sequence ID" value="AAX64460.1"/>
    <property type="molecule type" value="Genomic_DNA"/>
</dbReference>
<dbReference type="SMR" id="Q57S51"/>
<dbReference type="KEGG" id="sec:SCH_0554"/>
<dbReference type="HOGENOM" id="CLU_043456_1_0_6"/>
<dbReference type="Proteomes" id="UP000000538">
    <property type="component" value="Chromosome"/>
</dbReference>
<dbReference type="GO" id="GO:0016765">
    <property type="term" value="F:transferase activity, transferring alkyl or aryl (other than methyl) groups"/>
    <property type="evidence" value="ECO:0007669"/>
    <property type="project" value="UniProtKB-UniRule"/>
</dbReference>
<dbReference type="GO" id="GO:0043828">
    <property type="term" value="F:tRNA 2-selenouridine synthase activity"/>
    <property type="evidence" value="ECO:0007669"/>
    <property type="project" value="UniProtKB-EC"/>
</dbReference>
<dbReference type="GO" id="GO:0002098">
    <property type="term" value="P:tRNA wobble uridine modification"/>
    <property type="evidence" value="ECO:0007669"/>
    <property type="project" value="UniProtKB-UniRule"/>
</dbReference>
<dbReference type="CDD" id="cd01520">
    <property type="entry name" value="RHOD_YbbB"/>
    <property type="match status" value="1"/>
</dbReference>
<dbReference type="FunFam" id="3.40.250.10:FF:000009">
    <property type="entry name" value="tRNA 2-selenouridine/geranyl-2-thiouridine synthase"/>
    <property type="match status" value="1"/>
</dbReference>
<dbReference type="Gene3D" id="3.40.250.10">
    <property type="entry name" value="Rhodanese-like domain"/>
    <property type="match status" value="1"/>
</dbReference>
<dbReference type="HAMAP" id="MF_01622">
    <property type="entry name" value="tRNA_sel_U_synth"/>
    <property type="match status" value="1"/>
</dbReference>
<dbReference type="InterPro" id="IPR001763">
    <property type="entry name" value="Rhodanese-like_dom"/>
</dbReference>
<dbReference type="InterPro" id="IPR036873">
    <property type="entry name" value="Rhodanese-like_dom_sf"/>
</dbReference>
<dbReference type="InterPro" id="IPR017582">
    <property type="entry name" value="SelU"/>
</dbReference>
<dbReference type="NCBIfam" id="NF008749">
    <property type="entry name" value="PRK11784.1-1"/>
    <property type="match status" value="1"/>
</dbReference>
<dbReference type="NCBIfam" id="NF008751">
    <property type="entry name" value="PRK11784.1-3"/>
    <property type="match status" value="1"/>
</dbReference>
<dbReference type="NCBIfam" id="TIGR03167">
    <property type="entry name" value="tRNA_sel_U_synt"/>
    <property type="match status" value="1"/>
</dbReference>
<dbReference type="PANTHER" id="PTHR30401">
    <property type="entry name" value="TRNA 2-SELENOURIDINE SYNTHASE"/>
    <property type="match status" value="1"/>
</dbReference>
<dbReference type="PANTHER" id="PTHR30401:SF0">
    <property type="entry name" value="TRNA 2-SELENOURIDINE SYNTHASE"/>
    <property type="match status" value="1"/>
</dbReference>
<dbReference type="Pfam" id="PF00581">
    <property type="entry name" value="Rhodanese"/>
    <property type="match status" value="1"/>
</dbReference>
<dbReference type="SMART" id="SM00450">
    <property type="entry name" value="RHOD"/>
    <property type="match status" value="1"/>
</dbReference>
<dbReference type="SUPFAM" id="SSF52821">
    <property type="entry name" value="Rhodanese/Cell cycle control phosphatase"/>
    <property type="match status" value="1"/>
</dbReference>
<dbReference type="PROSITE" id="PS50206">
    <property type="entry name" value="RHODANESE_3"/>
    <property type="match status" value="1"/>
</dbReference>
<protein>
    <recommendedName>
        <fullName evidence="1">tRNA 2-selenouridine synthase</fullName>
        <ecNumber evidence="1">2.9.1.3</ecNumber>
    </recommendedName>
</protein>
<gene>
    <name evidence="1" type="primary">selU</name>
    <name type="ordered locus">SCH_0554</name>
</gene>